<organism>
    <name type="scientific">Klebsiella pneumoniae subsp. pneumoniae (strain ATCC 700721 / MGH 78578)</name>
    <dbReference type="NCBI Taxonomy" id="272620"/>
    <lineage>
        <taxon>Bacteria</taxon>
        <taxon>Pseudomonadati</taxon>
        <taxon>Pseudomonadota</taxon>
        <taxon>Gammaproteobacteria</taxon>
        <taxon>Enterobacterales</taxon>
        <taxon>Enterobacteriaceae</taxon>
        <taxon>Klebsiella/Raoultella group</taxon>
        <taxon>Klebsiella</taxon>
        <taxon>Klebsiella pneumoniae complex</taxon>
    </lineage>
</organism>
<evidence type="ECO:0000255" key="1">
    <source>
        <dbReference type="HAMAP-Rule" id="MF_01678"/>
    </source>
</evidence>
<evidence type="ECO:0000305" key="2"/>
<gene>
    <name evidence="1" type="primary">mtnA</name>
    <name type="ordered locus">KPN78578_06160</name>
    <name type="ORF">KPN_00627</name>
</gene>
<protein>
    <recommendedName>
        <fullName evidence="1">Methylthioribose-1-phosphate isomerase</fullName>
        <shortName evidence="1">M1Pi</shortName>
        <shortName evidence="1">MTR-1-P isomerase</shortName>
        <ecNumber evidence="1">5.3.1.23</ecNumber>
    </recommendedName>
    <alternativeName>
        <fullName evidence="1">S-methyl-5-thioribose-1-phosphate isomerase</fullName>
    </alternativeName>
</protein>
<keyword id="KW-0028">Amino-acid biosynthesis</keyword>
<keyword id="KW-0413">Isomerase</keyword>
<keyword id="KW-0486">Methionine biosynthesis</keyword>
<dbReference type="EC" id="5.3.1.23" evidence="1"/>
<dbReference type="EMBL" id="CP000647">
    <property type="protein sequence ID" value="ABR76077.1"/>
    <property type="molecule type" value="Genomic_DNA"/>
</dbReference>
<dbReference type="RefSeq" id="WP_012068437.1">
    <property type="nucleotide sequence ID" value="NC_009648.1"/>
</dbReference>
<dbReference type="SMR" id="A6T656"/>
<dbReference type="STRING" id="272620.KPN_00627"/>
<dbReference type="PaxDb" id="272620-KPN_00627"/>
<dbReference type="EnsemblBacteria" id="ABR76077">
    <property type="protein sequence ID" value="ABR76077"/>
    <property type="gene ID" value="KPN_00627"/>
</dbReference>
<dbReference type="KEGG" id="kpn:KPN_00627"/>
<dbReference type="HOGENOM" id="CLU_016218_1_2_6"/>
<dbReference type="UniPathway" id="UPA00904">
    <property type="reaction ID" value="UER00874"/>
</dbReference>
<dbReference type="Proteomes" id="UP000000265">
    <property type="component" value="Chromosome"/>
</dbReference>
<dbReference type="GO" id="GO:0046523">
    <property type="term" value="F:S-methyl-5-thioribose-1-phosphate isomerase activity"/>
    <property type="evidence" value="ECO:0007669"/>
    <property type="project" value="UniProtKB-UniRule"/>
</dbReference>
<dbReference type="GO" id="GO:0019509">
    <property type="term" value="P:L-methionine salvage from methylthioadenosine"/>
    <property type="evidence" value="ECO:0007669"/>
    <property type="project" value="UniProtKB-UniRule"/>
</dbReference>
<dbReference type="FunFam" id="3.40.50.10470:FF:000006">
    <property type="entry name" value="Methylthioribose-1-phosphate isomerase"/>
    <property type="match status" value="1"/>
</dbReference>
<dbReference type="Gene3D" id="1.20.120.420">
    <property type="entry name" value="translation initiation factor eif-2b, domain 1"/>
    <property type="match status" value="1"/>
</dbReference>
<dbReference type="Gene3D" id="3.40.50.10470">
    <property type="entry name" value="Translation initiation factor eif-2b, domain 2"/>
    <property type="match status" value="1"/>
</dbReference>
<dbReference type="HAMAP" id="MF_01678">
    <property type="entry name" value="Salvage_MtnA"/>
    <property type="match status" value="1"/>
</dbReference>
<dbReference type="InterPro" id="IPR000649">
    <property type="entry name" value="IF-2B-related"/>
</dbReference>
<dbReference type="InterPro" id="IPR005251">
    <property type="entry name" value="IF-M1Pi"/>
</dbReference>
<dbReference type="InterPro" id="IPR042529">
    <property type="entry name" value="IF_2B-like_C"/>
</dbReference>
<dbReference type="InterPro" id="IPR011559">
    <property type="entry name" value="Initiation_fac_2B_a/b/d"/>
</dbReference>
<dbReference type="InterPro" id="IPR027363">
    <property type="entry name" value="M1Pi_N"/>
</dbReference>
<dbReference type="InterPro" id="IPR037171">
    <property type="entry name" value="NagB/RpiA_transferase-like"/>
</dbReference>
<dbReference type="NCBIfam" id="TIGR00524">
    <property type="entry name" value="eIF-2B_rel"/>
    <property type="match status" value="1"/>
</dbReference>
<dbReference type="NCBIfam" id="NF004326">
    <property type="entry name" value="PRK05720.1"/>
    <property type="match status" value="1"/>
</dbReference>
<dbReference type="NCBIfam" id="TIGR00512">
    <property type="entry name" value="salvage_mtnA"/>
    <property type="match status" value="1"/>
</dbReference>
<dbReference type="PANTHER" id="PTHR43475">
    <property type="entry name" value="METHYLTHIORIBOSE-1-PHOSPHATE ISOMERASE"/>
    <property type="match status" value="1"/>
</dbReference>
<dbReference type="PANTHER" id="PTHR43475:SF1">
    <property type="entry name" value="METHYLTHIORIBOSE-1-PHOSPHATE ISOMERASE"/>
    <property type="match status" value="1"/>
</dbReference>
<dbReference type="Pfam" id="PF01008">
    <property type="entry name" value="IF-2B"/>
    <property type="match status" value="1"/>
</dbReference>
<dbReference type="SUPFAM" id="SSF100950">
    <property type="entry name" value="NagB/RpiA/CoA transferase-like"/>
    <property type="match status" value="1"/>
</dbReference>
<reference key="1">
    <citation type="submission" date="2006-09" db="EMBL/GenBank/DDBJ databases">
        <authorList>
            <consortium name="The Klebsiella pneumonia Genome Sequencing Project"/>
            <person name="McClelland M."/>
            <person name="Sanderson E.K."/>
            <person name="Spieth J."/>
            <person name="Clifton W.S."/>
            <person name="Latreille P."/>
            <person name="Sabo A."/>
            <person name="Pepin K."/>
            <person name="Bhonagiri V."/>
            <person name="Porwollik S."/>
            <person name="Ali J."/>
            <person name="Wilson R.K."/>
        </authorList>
    </citation>
    <scope>NUCLEOTIDE SEQUENCE [LARGE SCALE GENOMIC DNA]</scope>
    <source>
        <strain>ATCC 700721 / MGH 78578</strain>
    </source>
</reference>
<sequence length="342" mass="36086">MQTLQTTSLRVSENQLFILDQQALPQETRWLAADNVALLVDHIHTLRVRGAPLIGLSASLLLALLAQRGLNRDALQQALETLRAARPTAVNLMNNLDRMKQALAREDYPQALEAEALRLVEEDKQLCARIAEAGSALVKPGSRLLTHCNTGGLATAGVGTALGVIALAHRQGKVTNVWVDETRPLLQGGRLTAWELGELGVPYQLIADSMAASLMAQGQVDAVWVGADRIAANGDVANKIGTYSLAVLAHYHQIPFYVAAPQTTLDRYCPNGAAIPIEQRAAAEVTGVAGSFGAVQWAPTGAAVYNPAFDVTPAGLISGWVLDSGVVTPAQVAAGAFAPDNG</sequence>
<proteinExistence type="inferred from homology"/>
<accession>A6T656</accession>
<name>MTNA_KLEP7</name>
<feature type="chain" id="PRO_0000357197" description="Methylthioribose-1-phosphate isomerase">
    <location>
        <begin position="1"/>
        <end position="342"/>
    </location>
</feature>
<feature type="active site" description="Proton donor" evidence="1">
    <location>
        <position position="228"/>
    </location>
</feature>
<feature type="binding site" evidence="1">
    <location>
        <begin position="49"/>
        <end position="51"/>
    </location>
    <ligand>
        <name>substrate</name>
    </ligand>
</feature>
<feature type="binding site" evidence="1">
    <location>
        <position position="86"/>
    </location>
    <ligand>
        <name>substrate</name>
    </ligand>
</feature>
<feature type="binding site" evidence="1">
    <location>
        <position position="187"/>
    </location>
    <ligand>
        <name>substrate</name>
    </ligand>
</feature>
<feature type="binding site" evidence="1">
    <location>
        <begin position="238"/>
        <end position="239"/>
    </location>
    <ligand>
        <name>substrate</name>
    </ligand>
</feature>
<feature type="site" description="Transition state stabilizer" evidence="1">
    <location>
        <position position="148"/>
    </location>
</feature>
<comment type="function">
    <text evidence="1">Catalyzes the interconversion of methylthioribose-1-phosphate (MTR-1-P) into methylthioribulose-1-phosphate (MTRu-1-P).</text>
</comment>
<comment type="catalytic activity">
    <reaction evidence="1">
        <text>5-(methylsulfanyl)-alpha-D-ribose 1-phosphate = 5-(methylsulfanyl)-D-ribulose 1-phosphate</text>
        <dbReference type="Rhea" id="RHEA:19989"/>
        <dbReference type="ChEBI" id="CHEBI:58533"/>
        <dbReference type="ChEBI" id="CHEBI:58548"/>
        <dbReference type="EC" id="5.3.1.23"/>
    </reaction>
</comment>
<comment type="pathway">
    <text evidence="1">Amino-acid biosynthesis; L-methionine biosynthesis via salvage pathway; L-methionine from S-methyl-5-thio-alpha-D-ribose 1-phosphate: step 1/6.</text>
</comment>
<comment type="similarity">
    <text evidence="2">Belongs to the eIF-2B alpha/beta/delta subunits family. MtnA subfamily.</text>
</comment>